<dbReference type="EC" id="1.4.4.2" evidence="1"/>
<dbReference type="EMBL" id="AE017226">
    <property type="protein sequence ID" value="AAS12141.1"/>
    <property type="molecule type" value="Genomic_DNA"/>
</dbReference>
<dbReference type="RefSeq" id="NP_972230.1">
    <property type="nucleotide sequence ID" value="NC_002967.9"/>
</dbReference>
<dbReference type="RefSeq" id="WP_002679310.1">
    <property type="nucleotide sequence ID" value="NC_002967.9"/>
</dbReference>
<dbReference type="SMR" id="P62031"/>
<dbReference type="STRING" id="243275.TDE_1624"/>
<dbReference type="PaxDb" id="243275-TDE_1624"/>
<dbReference type="GeneID" id="2740865"/>
<dbReference type="KEGG" id="tde:TDE_1624"/>
<dbReference type="PATRIC" id="fig|243275.7.peg.1552"/>
<dbReference type="eggNOG" id="COG1003">
    <property type="taxonomic scope" value="Bacteria"/>
</dbReference>
<dbReference type="HOGENOM" id="CLU_004620_5_0_12"/>
<dbReference type="OrthoDB" id="9801272at2"/>
<dbReference type="Proteomes" id="UP000008212">
    <property type="component" value="Chromosome"/>
</dbReference>
<dbReference type="GO" id="GO:0005829">
    <property type="term" value="C:cytosol"/>
    <property type="evidence" value="ECO:0007669"/>
    <property type="project" value="TreeGrafter"/>
</dbReference>
<dbReference type="GO" id="GO:0005960">
    <property type="term" value="C:glycine cleavage complex"/>
    <property type="evidence" value="ECO:0007669"/>
    <property type="project" value="TreeGrafter"/>
</dbReference>
<dbReference type="GO" id="GO:0016594">
    <property type="term" value="F:glycine binding"/>
    <property type="evidence" value="ECO:0007669"/>
    <property type="project" value="TreeGrafter"/>
</dbReference>
<dbReference type="GO" id="GO:0004375">
    <property type="term" value="F:glycine dehydrogenase (decarboxylating) activity"/>
    <property type="evidence" value="ECO:0007669"/>
    <property type="project" value="UniProtKB-EC"/>
</dbReference>
<dbReference type="GO" id="GO:0030170">
    <property type="term" value="F:pyridoxal phosphate binding"/>
    <property type="evidence" value="ECO:0007669"/>
    <property type="project" value="TreeGrafter"/>
</dbReference>
<dbReference type="GO" id="GO:0019464">
    <property type="term" value="P:glycine decarboxylation via glycine cleavage system"/>
    <property type="evidence" value="ECO:0007669"/>
    <property type="project" value="UniProtKB-UniRule"/>
</dbReference>
<dbReference type="CDD" id="cd00613">
    <property type="entry name" value="GDC-P"/>
    <property type="match status" value="1"/>
</dbReference>
<dbReference type="FunFam" id="3.40.640.10:FF:000034">
    <property type="entry name" value="Probable glycine dehydrogenase (decarboxylating) subunit 2"/>
    <property type="match status" value="1"/>
</dbReference>
<dbReference type="FunFam" id="3.90.1150.10:FF:000014">
    <property type="entry name" value="Probable glycine dehydrogenase (decarboxylating) subunit 2"/>
    <property type="match status" value="1"/>
</dbReference>
<dbReference type="Gene3D" id="6.20.440.10">
    <property type="match status" value="1"/>
</dbReference>
<dbReference type="Gene3D" id="3.90.1150.10">
    <property type="entry name" value="Aspartate Aminotransferase, domain 1"/>
    <property type="match status" value="1"/>
</dbReference>
<dbReference type="Gene3D" id="3.40.640.10">
    <property type="entry name" value="Type I PLP-dependent aspartate aminotransferase-like (Major domain)"/>
    <property type="match status" value="1"/>
</dbReference>
<dbReference type="HAMAP" id="MF_00713">
    <property type="entry name" value="GcvPB"/>
    <property type="match status" value="1"/>
</dbReference>
<dbReference type="InterPro" id="IPR000192">
    <property type="entry name" value="Aminotrans_V_dom"/>
</dbReference>
<dbReference type="InterPro" id="IPR023012">
    <property type="entry name" value="GcvPB"/>
</dbReference>
<dbReference type="InterPro" id="IPR049316">
    <property type="entry name" value="GDC-P_C"/>
</dbReference>
<dbReference type="InterPro" id="IPR020581">
    <property type="entry name" value="GDC_P"/>
</dbReference>
<dbReference type="InterPro" id="IPR015424">
    <property type="entry name" value="PyrdxlP-dep_Trfase"/>
</dbReference>
<dbReference type="InterPro" id="IPR015421">
    <property type="entry name" value="PyrdxlP-dep_Trfase_major"/>
</dbReference>
<dbReference type="InterPro" id="IPR015422">
    <property type="entry name" value="PyrdxlP-dep_Trfase_small"/>
</dbReference>
<dbReference type="NCBIfam" id="NF003346">
    <property type="entry name" value="PRK04366.1"/>
    <property type="match status" value="1"/>
</dbReference>
<dbReference type="PANTHER" id="PTHR11773:SF1">
    <property type="entry name" value="GLYCINE DEHYDROGENASE (DECARBOXYLATING), MITOCHONDRIAL"/>
    <property type="match status" value="1"/>
</dbReference>
<dbReference type="PANTHER" id="PTHR11773">
    <property type="entry name" value="GLYCINE DEHYDROGENASE, DECARBOXYLATING"/>
    <property type="match status" value="1"/>
</dbReference>
<dbReference type="Pfam" id="PF00266">
    <property type="entry name" value="Aminotran_5"/>
    <property type="match status" value="1"/>
</dbReference>
<dbReference type="Pfam" id="PF21478">
    <property type="entry name" value="GcvP2_C"/>
    <property type="match status" value="1"/>
</dbReference>
<dbReference type="SUPFAM" id="SSF53383">
    <property type="entry name" value="PLP-dependent transferases"/>
    <property type="match status" value="1"/>
</dbReference>
<name>GCSPB_TREDE</name>
<sequence>MSELIFEKSVKGHKFAEAKLTVPEYKLDSKYLRASDAKLPEVSELEFVRHYMELSKRTHGVDNGFYPLGSCTMKYNPKLNEEVADLPNFTNIHPLQPEHTMKGCIEAMGDLGKKLGEITGMDAFSLQPSAGAHGEFTALLVIRAYHEKRGDHARNKILVPDSAHGTNPASAAMVGCEIVNIPSDKDGNVDIEELKKTVGNDTAALMLTNPNTLGLFETHIKEIAEIVHKAGGLLYYDGANLNAIMGRLRPGDMGYDIVHLNLHKTFSTPHGGGGPGSGPIGCKKFLEEFLPVPVVTGSDGSYKLDYNRPDSIGRVRNFYGNFLVFLRAYAYILTLGSEGIRESSGYAVLNANYLKKKLEKEYDVAFDRICMHEFVLTLEKIKEETGVSALDIAKGLIDDGIHPPTMYFPLIVHEALMFEPTETESKSTLDFTAEVMIKLKKEAYSNPEKLHGYPYTRPIGRVDETKAAREPVLRYKACCCCK</sequence>
<proteinExistence type="inferred from homology"/>
<comment type="function">
    <text evidence="1">The glycine cleavage system catalyzes the degradation of glycine. The P protein binds the alpha-amino group of glycine through its pyridoxal phosphate cofactor; CO(2) is released and the remaining methylamine moiety is then transferred to the lipoamide cofactor of the H protein.</text>
</comment>
<comment type="catalytic activity">
    <reaction evidence="1">
        <text>N(6)-[(R)-lipoyl]-L-lysyl-[glycine-cleavage complex H protein] + glycine + H(+) = N(6)-[(R)-S(8)-aminomethyldihydrolipoyl]-L-lysyl-[glycine-cleavage complex H protein] + CO2</text>
        <dbReference type="Rhea" id="RHEA:24304"/>
        <dbReference type="Rhea" id="RHEA-COMP:10494"/>
        <dbReference type="Rhea" id="RHEA-COMP:10495"/>
        <dbReference type="ChEBI" id="CHEBI:15378"/>
        <dbReference type="ChEBI" id="CHEBI:16526"/>
        <dbReference type="ChEBI" id="CHEBI:57305"/>
        <dbReference type="ChEBI" id="CHEBI:83099"/>
        <dbReference type="ChEBI" id="CHEBI:83143"/>
        <dbReference type="EC" id="1.4.4.2"/>
    </reaction>
</comment>
<comment type="cofactor">
    <cofactor evidence="1">
        <name>pyridoxal 5'-phosphate</name>
        <dbReference type="ChEBI" id="CHEBI:597326"/>
    </cofactor>
</comment>
<comment type="subunit">
    <text evidence="1">The glycine cleavage system is composed of four proteins: P, T, L and H. In this organism, the P 'protein' is a heterodimer of two subunits.</text>
</comment>
<comment type="similarity">
    <text evidence="1">Belongs to the GcvP family. C-terminal subunit subfamily.</text>
</comment>
<keyword id="KW-0560">Oxidoreductase</keyword>
<keyword id="KW-0663">Pyridoxal phosphate</keyword>
<keyword id="KW-1185">Reference proteome</keyword>
<organism>
    <name type="scientific">Treponema denticola (strain ATCC 35405 / DSM 14222 / CIP 103919 / JCM 8153 / KCTC 15104)</name>
    <dbReference type="NCBI Taxonomy" id="243275"/>
    <lineage>
        <taxon>Bacteria</taxon>
        <taxon>Pseudomonadati</taxon>
        <taxon>Spirochaetota</taxon>
        <taxon>Spirochaetia</taxon>
        <taxon>Spirochaetales</taxon>
        <taxon>Treponemataceae</taxon>
        <taxon>Treponema</taxon>
    </lineage>
</organism>
<feature type="chain" id="PRO_0000167024" description="Probable glycine dehydrogenase (decarboxylating) subunit 2">
    <location>
        <begin position="1"/>
        <end position="482"/>
    </location>
</feature>
<feature type="modified residue" description="N6-(pyridoxal phosphate)lysine" evidence="1">
    <location>
        <position position="264"/>
    </location>
</feature>
<evidence type="ECO:0000255" key="1">
    <source>
        <dbReference type="HAMAP-Rule" id="MF_00713"/>
    </source>
</evidence>
<protein>
    <recommendedName>
        <fullName evidence="1">Probable glycine dehydrogenase (decarboxylating) subunit 2</fullName>
        <ecNumber evidence="1">1.4.4.2</ecNumber>
    </recommendedName>
    <alternativeName>
        <fullName evidence="1">Glycine cleavage system P-protein subunit 2</fullName>
    </alternativeName>
    <alternativeName>
        <fullName evidence="1">Glycine decarboxylase subunit 2</fullName>
    </alternativeName>
    <alternativeName>
        <fullName evidence="1">Glycine dehydrogenase (aminomethyl-transferring) subunit 2</fullName>
    </alternativeName>
</protein>
<gene>
    <name evidence="1" type="primary">gcvPB</name>
    <name type="ordered locus">TDE_1624</name>
</gene>
<accession>P62031</accession>
<reference key="1">
    <citation type="journal article" date="2004" name="Proc. Natl. Acad. Sci. U.S.A.">
        <title>Comparison of the genome of the oral pathogen Treponema denticola with other spirochete genomes.</title>
        <authorList>
            <person name="Seshadri R."/>
            <person name="Myers G.S.A."/>
            <person name="Tettelin H."/>
            <person name="Eisen J.A."/>
            <person name="Heidelberg J.F."/>
            <person name="Dodson R.J."/>
            <person name="Davidsen T.M."/>
            <person name="DeBoy R.T."/>
            <person name="Fouts D.E."/>
            <person name="Haft D.H."/>
            <person name="Selengut J."/>
            <person name="Ren Q."/>
            <person name="Brinkac L.M."/>
            <person name="Madupu R."/>
            <person name="Kolonay J.F."/>
            <person name="Durkin S.A."/>
            <person name="Daugherty S.C."/>
            <person name="Shetty J."/>
            <person name="Shvartsbeyn A."/>
            <person name="Gebregeorgis E."/>
            <person name="Geer K."/>
            <person name="Tsegaye G."/>
            <person name="Malek J.A."/>
            <person name="Ayodeji B."/>
            <person name="Shatsman S."/>
            <person name="McLeod M.P."/>
            <person name="Smajs D."/>
            <person name="Howell J.K."/>
            <person name="Pal S."/>
            <person name="Amin A."/>
            <person name="Vashisth P."/>
            <person name="McNeill T.Z."/>
            <person name="Xiang Q."/>
            <person name="Sodergren E."/>
            <person name="Baca E."/>
            <person name="Weinstock G.M."/>
            <person name="Norris S.J."/>
            <person name="Fraser C.M."/>
            <person name="Paulsen I.T."/>
        </authorList>
    </citation>
    <scope>NUCLEOTIDE SEQUENCE [LARGE SCALE GENOMIC DNA]</scope>
    <source>
        <strain>ATCC 35405 / DSM 14222 / CIP 103919 / JCM 8153 / KCTC 15104</strain>
    </source>
</reference>